<keyword id="KW-0217">Developmental protein</keyword>
<keyword id="KW-0238">DNA-binding</keyword>
<keyword id="KW-0371">Homeobox</keyword>
<keyword id="KW-0539">Nucleus</keyword>
<keyword id="KW-1185">Reference proteome</keyword>
<keyword id="KW-0804">Transcription</keyword>
<keyword id="KW-0805">Transcription regulation</keyword>
<dbReference type="EMBL" id="AJ271730">
    <property type="protein sequence ID" value="CAC19632.1"/>
    <property type="molecule type" value="mRNA"/>
</dbReference>
<dbReference type="RefSeq" id="NP_001079317.1">
    <property type="nucleotide sequence ID" value="NM_001085848.1"/>
</dbReference>
<dbReference type="SMR" id="Q9DDB0"/>
<dbReference type="GeneID" id="378629"/>
<dbReference type="KEGG" id="xla:378629"/>
<dbReference type="AGR" id="Xenbase:XB-GENE-1188142"/>
<dbReference type="CTD" id="378629"/>
<dbReference type="Xenbase" id="XB-GENE-1188142">
    <property type="gene designation" value="vax1.L"/>
</dbReference>
<dbReference type="OrthoDB" id="6159439at2759"/>
<dbReference type="Proteomes" id="UP000186698">
    <property type="component" value="Chromosome 7L"/>
</dbReference>
<dbReference type="Bgee" id="378629">
    <property type="expression patterns" value="Expressed in neurula embryo and 3 other cell types or tissues"/>
</dbReference>
<dbReference type="GO" id="GO:0005634">
    <property type="term" value="C:nucleus"/>
    <property type="evidence" value="ECO:0000318"/>
    <property type="project" value="GO_Central"/>
</dbReference>
<dbReference type="GO" id="GO:0000981">
    <property type="term" value="F:DNA-binding transcription factor activity, RNA polymerase II-specific"/>
    <property type="evidence" value="ECO:0000318"/>
    <property type="project" value="GO_Central"/>
</dbReference>
<dbReference type="GO" id="GO:0000978">
    <property type="term" value="F:RNA polymerase II cis-regulatory region sequence-specific DNA binding"/>
    <property type="evidence" value="ECO:0000318"/>
    <property type="project" value="GO_Central"/>
</dbReference>
<dbReference type="GO" id="GO:0007420">
    <property type="term" value="P:brain development"/>
    <property type="evidence" value="ECO:0000318"/>
    <property type="project" value="GO_Central"/>
</dbReference>
<dbReference type="GO" id="GO:0007417">
    <property type="term" value="P:central nervous system development"/>
    <property type="evidence" value="ECO:0000318"/>
    <property type="project" value="GO_Central"/>
</dbReference>
<dbReference type="GO" id="GO:0030182">
    <property type="term" value="P:neuron differentiation"/>
    <property type="evidence" value="ECO:0000318"/>
    <property type="project" value="GO_Central"/>
</dbReference>
<dbReference type="GO" id="GO:0006357">
    <property type="term" value="P:regulation of transcription by RNA polymerase II"/>
    <property type="evidence" value="ECO:0000318"/>
    <property type="project" value="GO_Central"/>
</dbReference>
<dbReference type="CDD" id="cd00086">
    <property type="entry name" value="homeodomain"/>
    <property type="match status" value="1"/>
</dbReference>
<dbReference type="FunFam" id="1.10.10.60:FF:000375">
    <property type="entry name" value="Ventral anterior homeobox 1"/>
    <property type="match status" value="1"/>
</dbReference>
<dbReference type="Gene3D" id="1.10.10.60">
    <property type="entry name" value="Homeodomain-like"/>
    <property type="match status" value="1"/>
</dbReference>
<dbReference type="InterPro" id="IPR050877">
    <property type="entry name" value="EMX-VAX-Noto_Homeobox_TFs"/>
</dbReference>
<dbReference type="InterPro" id="IPR001356">
    <property type="entry name" value="HD"/>
</dbReference>
<dbReference type="InterPro" id="IPR020479">
    <property type="entry name" value="HD_metazoa"/>
</dbReference>
<dbReference type="InterPro" id="IPR017970">
    <property type="entry name" value="Homeobox_CS"/>
</dbReference>
<dbReference type="InterPro" id="IPR009057">
    <property type="entry name" value="Homeodomain-like_sf"/>
</dbReference>
<dbReference type="InterPro" id="IPR000047">
    <property type="entry name" value="HTH_motif"/>
</dbReference>
<dbReference type="PANTHER" id="PTHR24339">
    <property type="entry name" value="HOMEOBOX PROTEIN EMX-RELATED"/>
    <property type="match status" value="1"/>
</dbReference>
<dbReference type="PANTHER" id="PTHR24339:SF32">
    <property type="entry name" value="VENTRAL ANTERIOR HOMEOBOX 1"/>
    <property type="match status" value="1"/>
</dbReference>
<dbReference type="Pfam" id="PF00046">
    <property type="entry name" value="Homeodomain"/>
    <property type="match status" value="1"/>
</dbReference>
<dbReference type="PRINTS" id="PR00024">
    <property type="entry name" value="HOMEOBOX"/>
</dbReference>
<dbReference type="PRINTS" id="PR00031">
    <property type="entry name" value="HTHREPRESSR"/>
</dbReference>
<dbReference type="SMART" id="SM00389">
    <property type="entry name" value="HOX"/>
    <property type="match status" value="1"/>
</dbReference>
<dbReference type="SUPFAM" id="SSF46689">
    <property type="entry name" value="Homeodomain-like"/>
    <property type="match status" value="1"/>
</dbReference>
<dbReference type="PROSITE" id="PS00027">
    <property type="entry name" value="HOMEOBOX_1"/>
    <property type="match status" value="1"/>
</dbReference>
<dbReference type="PROSITE" id="PS50071">
    <property type="entry name" value="HOMEOBOX_2"/>
    <property type="match status" value="1"/>
</dbReference>
<comment type="function">
    <text>Involved in ventral eye development.</text>
</comment>
<comment type="subcellular location">
    <subcellularLocation>
        <location evidence="1">Nucleus</location>
    </subcellularLocation>
</comment>
<comment type="developmental stage">
    <text evidence="3">At early neurula stages, exclusively activated in the presumptive ventral telencephalon. Since midneurula stages also found in the medial aspect of the eye field. At tailbud and tadpole stages, expression seen in the optic stalk, optic nerve, optic disk, ventral retina, ventral telencephalon and diencephalon. Finally during metamorphosis expression is maintained in the optic chiasm, ventral hypothalamus and hypophysis.</text>
</comment>
<comment type="similarity">
    <text evidence="4">Belongs to the EMX homeobox family.</text>
</comment>
<gene>
    <name type="primary">vax1-b</name>
    <name type="synonym">vax1b</name>
</gene>
<accession>Q9DDB0</accession>
<protein>
    <recommendedName>
        <fullName>Ventral anterior homeobox 1b</fullName>
    </recommendedName>
</protein>
<sequence>MFEKTRDMDVRCNIEENGRISKPKDNKEIRESQSKMPSTYPAPGSSEGCAKNKSSSAVDPEYCRRILVRDAKGSLREIILPKGLDLDRPKRTRTSFTAEQLYRLEMEFQRCQYVVGRERTELARQLNLSETQVKVWFQNRRTKQKKDQGKDSELRSVVSETAATCSVLRLLEQGRLLSPPGLPGLMPPCTTGTLRAPNSSGPGTTSLPTVTNTHPHQPGLHPSPTGHNIFNMPVPSLLGTVANRLSSHPLTMAGNLQELSARYLSSSAFEPYSRSISKDSLDKKLLD</sequence>
<feature type="chain" id="PRO_0000240528" description="Ventral anterior homeobox 1b">
    <location>
        <begin position="1"/>
        <end position="287"/>
    </location>
</feature>
<feature type="DNA-binding region" description="Homeobox" evidence="1">
    <location>
        <begin position="89"/>
        <end position="148"/>
    </location>
</feature>
<feature type="region of interest" description="Disordered" evidence="2">
    <location>
        <begin position="1"/>
        <end position="55"/>
    </location>
</feature>
<feature type="compositionally biased region" description="Basic and acidic residues" evidence="2">
    <location>
        <begin position="1"/>
        <end position="33"/>
    </location>
</feature>
<proteinExistence type="evidence at transcript level"/>
<name>VAX1B_XENLA</name>
<reference key="1">
    <citation type="journal article" date="2001" name="Mech. Dev.">
        <title>Expression of the Xvax2 gene demarcates presumptive ventral telencephalon and specific visual structures in Xenopus laevis.</title>
        <authorList>
            <person name="Liu Y."/>
            <person name="Lupo G."/>
            <person name="Marchitiello A."/>
            <person name="Gestri G."/>
            <person name="He R.-Q."/>
            <person name="Banfi S."/>
            <person name="Barsacchi G."/>
        </authorList>
    </citation>
    <scope>NUCLEOTIDE SEQUENCE [MRNA]</scope>
    <scope>DEVELOPMENTAL STAGE</scope>
</reference>
<organism>
    <name type="scientific">Xenopus laevis</name>
    <name type="common">African clawed frog</name>
    <dbReference type="NCBI Taxonomy" id="8355"/>
    <lineage>
        <taxon>Eukaryota</taxon>
        <taxon>Metazoa</taxon>
        <taxon>Chordata</taxon>
        <taxon>Craniata</taxon>
        <taxon>Vertebrata</taxon>
        <taxon>Euteleostomi</taxon>
        <taxon>Amphibia</taxon>
        <taxon>Batrachia</taxon>
        <taxon>Anura</taxon>
        <taxon>Pipoidea</taxon>
        <taxon>Pipidae</taxon>
        <taxon>Xenopodinae</taxon>
        <taxon>Xenopus</taxon>
        <taxon>Xenopus</taxon>
    </lineage>
</organism>
<evidence type="ECO:0000255" key="1">
    <source>
        <dbReference type="PROSITE-ProRule" id="PRU00108"/>
    </source>
</evidence>
<evidence type="ECO:0000256" key="2">
    <source>
        <dbReference type="SAM" id="MobiDB-lite"/>
    </source>
</evidence>
<evidence type="ECO:0000269" key="3">
    <source>
    </source>
</evidence>
<evidence type="ECO:0000305" key="4"/>